<feature type="signal peptide" evidence="1">
    <location>
        <begin position="1"/>
        <end position="17"/>
    </location>
</feature>
<feature type="chain" id="PRO_0000461530" description="U-megalopygitoxin(8)-Mo12" evidence="5">
    <location>
        <begin position="18"/>
        <end position="284"/>
    </location>
</feature>
<feature type="modified residue" description="Histidine amide" evidence="2">
    <location>
        <position position="284"/>
    </location>
</feature>
<keyword id="KW-0027">Amidation</keyword>
<keyword id="KW-1015">Disulfide bond</keyword>
<keyword id="KW-0472">Membrane</keyword>
<keyword id="KW-0964">Secreted</keyword>
<keyword id="KW-0732">Signal</keyword>
<keyword id="KW-1052">Target cell membrane</keyword>
<keyword id="KW-1053">Target membrane</keyword>
<keyword id="KW-0800">Toxin</keyword>
<proteinExistence type="evidence at protein level"/>
<protein>
    <recommendedName>
        <fullName evidence="3">U-megalopygitoxin(8)-Mo12</fullName>
        <shortName evidence="3">U-MPTX(8)-Mo12</shortName>
        <shortName evidence="6">U-MPTX.8-12</shortName>
    </recommendedName>
    <alternativeName>
        <fullName evidence="3">Aerolysin-like pore-forming toxin</fullName>
    </alternativeName>
    <alternativeName>
        <fullName evidence="3">Megalysin</fullName>
    </alternativeName>
</protein>
<sequence>MNLQYLILSLLSTTVYGGFNLNFDSKGDALEKAAIDFTGEDVAVIKENERESFGITDGPLKDACGKVSGRRPDHVWLYKPTLWGDMYTMYKWPEVTRTLTPIAARVVGKEQKPMIVSSQVYRNRSNRTVKVNGKISQEVTNTVENKWSKTHGLSVTASMTYSFKVVEASMEIGYTSEWGQEETKSESVAVGQEMGFESELQPGESVEAVLSATKGSMIIDVTYRATLDGCCAINYNNGWKGHHYYCYPIGMVQDAGKLKKHVDVKETIKIGFYSDSHVIVRDKHGKK</sequence>
<accession>P0DXX2</accession>
<dbReference type="EMBL" id="OP514863">
    <property type="protein sequence ID" value="WJJ70381.1"/>
    <property type="molecule type" value="mRNA"/>
</dbReference>
<dbReference type="GO" id="GO:0005576">
    <property type="term" value="C:extracellular region"/>
    <property type="evidence" value="ECO:0007669"/>
    <property type="project" value="UniProtKB-SubCell"/>
</dbReference>
<dbReference type="GO" id="GO:0016020">
    <property type="term" value="C:membrane"/>
    <property type="evidence" value="ECO:0007669"/>
    <property type="project" value="UniProtKB-KW"/>
</dbReference>
<dbReference type="GO" id="GO:0044218">
    <property type="term" value="C:other organism cell membrane"/>
    <property type="evidence" value="ECO:0007669"/>
    <property type="project" value="UniProtKB-KW"/>
</dbReference>
<dbReference type="GO" id="GO:0090729">
    <property type="term" value="F:toxin activity"/>
    <property type="evidence" value="ECO:0007669"/>
    <property type="project" value="UniProtKB-KW"/>
</dbReference>
<dbReference type="CDD" id="cd20235">
    <property type="entry name" value="PFM_spherulin-2a-like"/>
    <property type="match status" value="1"/>
</dbReference>
<dbReference type="Gene3D" id="2.170.15.10">
    <property type="entry name" value="Proaerolysin, chain A, domain 3"/>
    <property type="match status" value="1"/>
</dbReference>
<dbReference type="SUPFAM" id="SSF56973">
    <property type="entry name" value="Aerolisin/ETX pore-forming domain"/>
    <property type="match status" value="1"/>
</dbReference>
<reference key="1">
    <citation type="journal article" date="2023" name="Proc. Natl. Acad. Sci. U.S.A.">
        <title>Horizontal gene transfer underlies the painful stings of asp caterpillars (Lepidoptera: Megalopygidae).</title>
        <authorList>
            <person name="Walker A.A."/>
            <person name="Robinson S.D."/>
            <person name="Merritt D.J."/>
            <person name="Cardoso F.C."/>
            <person name="Goudarzi M.H."/>
            <person name="Mercedes R.S."/>
            <person name="Eagles D.A."/>
            <person name="Cooper P."/>
            <person name="Zdenek C.N."/>
            <person name="Fry B.G."/>
            <person name="Hall D.W."/>
            <person name="Vetter I."/>
            <person name="King G.F."/>
        </authorList>
    </citation>
    <scope>NUCLEOTIDE SEQUENCE [MRNA]</scope>
    <scope>MASS SPECTROMETRY</scope>
    <scope>PROBABLE AMIDATION AT HIS-284</scope>
    <scope>3D-STRUCTURE MODELING</scope>
    <scope>RECOMBINANT EXPRESSION</scope>
    <scope>SUBCELLULAR LOCATION</scope>
    <scope>TISSUE SPECIFICITY</scope>
    <scope>DEVELOPMENTAL STAGE</scope>
    <source>
        <tissue>Venom</tissue>
    </source>
</reference>
<name>TXU8C_MEGOP</name>
<comment type="function">
    <text evidence="5">May function as a large pore-forming protein.</text>
</comment>
<comment type="subcellular location">
    <subcellularLocation>
        <location evidence="2">Secreted</location>
    </subcellularLocation>
    <subcellularLocation>
        <location evidence="5">Target cell membrane</location>
    </subcellularLocation>
</comment>
<comment type="tissue specificity">
    <text evidence="2">Expressed by the venom apparatus.</text>
</comment>
<comment type="developmental stage">
    <text evidence="2">Larvae.</text>
</comment>
<comment type="PTM">
    <text evidence="5">Contains 2 disulfide bonds.</text>
</comment>
<comment type="mass spectrometry">
    <text>Monoisotopic mass.</text>
</comment>
<comment type="similarity">
    <text evidence="4">Belongs to the megalysin family.</text>
</comment>
<organism>
    <name type="scientific">Megalopyge opercularis</name>
    <name type="common">Southern flannel moth</name>
    <name type="synonym">Phalaena opercularis</name>
    <dbReference type="NCBI Taxonomy" id="1113279"/>
    <lineage>
        <taxon>Eukaryota</taxon>
        <taxon>Metazoa</taxon>
        <taxon>Ecdysozoa</taxon>
        <taxon>Arthropoda</taxon>
        <taxon>Hexapoda</taxon>
        <taxon>Insecta</taxon>
        <taxon>Pterygota</taxon>
        <taxon>Neoptera</taxon>
        <taxon>Endopterygota</taxon>
        <taxon>Lepidoptera</taxon>
        <taxon>Glossata</taxon>
        <taxon>Ditrysia</taxon>
        <taxon>Zygaenoidea</taxon>
        <taxon>Megalopygidae</taxon>
        <taxon>Megalopyge</taxon>
    </lineage>
</organism>
<evidence type="ECO:0000255" key="1"/>
<evidence type="ECO:0000269" key="2">
    <source>
    </source>
</evidence>
<evidence type="ECO:0000303" key="3">
    <source>
    </source>
</evidence>
<evidence type="ECO:0000305" key="4"/>
<evidence type="ECO:0000305" key="5">
    <source>
    </source>
</evidence>
<evidence type="ECO:0000312" key="6">
    <source>
        <dbReference type="EMBL" id="WJJ70381.1"/>
    </source>
</evidence>